<feature type="chain" id="PRO_0000074243" description="Defensin-2">
    <location>
        <begin position="1"/>
        <end position="47"/>
    </location>
</feature>
<feature type="disulfide bond" evidence="1 3">
    <location>
        <begin position="3"/>
        <end position="47"/>
    </location>
</feature>
<feature type="disulfide bond" evidence="1 3">
    <location>
        <begin position="14"/>
        <end position="35"/>
    </location>
</feature>
<feature type="disulfide bond" evidence="1 3">
    <location>
        <begin position="20"/>
        <end position="41"/>
    </location>
</feature>
<feature type="disulfide bond" evidence="1 3">
    <location>
        <begin position="24"/>
        <end position="43"/>
    </location>
</feature>
<feature type="strand" evidence="4">
    <location>
        <begin position="3"/>
        <end position="11"/>
    </location>
</feature>
<feature type="helix" evidence="4">
    <location>
        <begin position="20"/>
        <end position="26"/>
    </location>
</feature>
<feature type="strand" evidence="4">
    <location>
        <begin position="37"/>
        <end position="39"/>
    </location>
</feature>
<feature type="strand" evidence="4">
    <location>
        <begin position="41"/>
        <end position="44"/>
    </location>
</feature>
<accession>P81930</accession>
<protein>
    <recommendedName>
        <fullName>Defensin-2</fullName>
    </recommendedName>
    <alternativeName>
        <fullName>Antifungal protein Psd2</fullName>
    </alternativeName>
    <alternativeName>
        <fullName>Defense-related peptide 2</fullName>
    </alternativeName>
</protein>
<dbReference type="PDB" id="6NOM">
    <property type="method" value="NMR"/>
    <property type="chains" value="A=1-47"/>
</dbReference>
<dbReference type="PDBsum" id="6NOM"/>
<dbReference type="BMRB" id="P81930"/>
<dbReference type="SMR" id="P81930"/>
<dbReference type="GO" id="GO:0050832">
    <property type="term" value="P:defense response to fungus"/>
    <property type="evidence" value="ECO:0007669"/>
    <property type="project" value="UniProtKB-KW"/>
</dbReference>
<dbReference type="GO" id="GO:0031640">
    <property type="term" value="P:killing of cells of another organism"/>
    <property type="evidence" value="ECO:0007669"/>
    <property type="project" value="UniProtKB-KW"/>
</dbReference>
<dbReference type="Gene3D" id="3.30.30.10">
    <property type="entry name" value="Knottin, scorpion toxin-like"/>
    <property type="match status" value="1"/>
</dbReference>
<dbReference type="InterPro" id="IPR008176">
    <property type="entry name" value="Defensin_plant"/>
</dbReference>
<dbReference type="InterPro" id="IPR003614">
    <property type="entry name" value="Scorpion_toxin-like"/>
</dbReference>
<dbReference type="InterPro" id="IPR036574">
    <property type="entry name" value="Scorpion_toxin-like_sf"/>
</dbReference>
<dbReference type="Pfam" id="PF00304">
    <property type="entry name" value="Gamma-thionin"/>
    <property type="match status" value="1"/>
</dbReference>
<dbReference type="SMART" id="SM00505">
    <property type="entry name" value="Knot1"/>
    <property type="match status" value="1"/>
</dbReference>
<dbReference type="SUPFAM" id="SSF57095">
    <property type="entry name" value="Scorpion toxin-like"/>
    <property type="match status" value="1"/>
</dbReference>
<dbReference type="PROSITE" id="PS00940">
    <property type="entry name" value="GAMMA_THIONIN"/>
    <property type="match status" value="1"/>
</dbReference>
<organism>
    <name type="scientific">Pisum sativum</name>
    <name type="common">Garden pea</name>
    <name type="synonym">Lathyrus oleraceus</name>
    <dbReference type="NCBI Taxonomy" id="3888"/>
    <lineage>
        <taxon>Eukaryota</taxon>
        <taxon>Viridiplantae</taxon>
        <taxon>Streptophyta</taxon>
        <taxon>Embryophyta</taxon>
        <taxon>Tracheophyta</taxon>
        <taxon>Spermatophyta</taxon>
        <taxon>Magnoliopsida</taxon>
        <taxon>eudicotyledons</taxon>
        <taxon>Gunneridae</taxon>
        <taxon>Pentapetalae</taxon>
        <taxon>rosids</taxon>
        <taxon>fabids</taxon>
        <taxon>Fabales</taxon>
        <taxon>Fabaceae</taxon>
        <taxon>Papilionoideae</taxon>
        <taxon>50 kb inversion clade</taxon>
        <taxon>NPAAA clade</taxon>
        <taxon>Hologalegina</taxon>
        <taxon>IRL clade</taxon>
        <taxon>Fabeae</taxon>
        <taxon>Pisum</taxon>
    </lineage>
</organism>
<comment type="function">
    <text>Possesses antifungal activity sensitive to inorganic cations.</text>
</comment>
<comment type="tissue specificity">
    <text>Epidermis and vascular bundles of pods, stems, roots, leaves and wet or dry seeds.</text>
</comment>
<comment type="developmental stage">
    <text>Mature seed in dormancy.</text>
</comment>
<comment type="similarity">
    <text evidence="2">Belongs to the DEFL family.</text>
</comment>
<sequence length="47" mass="5404">KTCENLSGTFKGPCIPDGNCNKHCRNNEHLLSGRCRDDFRCWCTNRC</sequence>
<evidence type="ECO:0000269" key="1">
    <source>
    </source>
</evidence>
<evidence type="ECO:0000305" key="2"/>
<evidence type="ECO:0007744" key="3">
    <source>
        <dbReference type="PDB" id="6NOM"/>
    </source>
</evidence>
<evidence type="ECO:0007829" key="4">
    <source>
        <dbReference type="PDB" id="6NOM"/>
    </source>
</evidence>
<name>DEF2_PEA</name>
<reference key="1">
    <citation type="journal article" date="2000" name="Arch. Biochem. Biophys.">
        <title>Characterization of two novel defense peptides from pea (Pisum sativum) seeds.</title>
        <authorList>
            <person name="Almeida M.S."/>
            <person name="Cabral K.M."/>
            <person name="Zingali R.B."/>
            <person name="Kurtenbach E."/>
        </authorList>
    </citation>
    <scope>PROTEIN SEQUENCE</scope>
    <source>
        <strain>cv. Mikado</strain>
        <tissue>Epidermis</tissue>
        <tissue>Seed endosperm</tissue>
    </source>
</reference>
<reference key="2">
    <citation type="journal article" date="2020" name="Proteins">
        <title>Nuclear magnetic resonance solution structure of Pisum sativum defensin 2 provides evidence for the presence of hydrophobic surface-clusters.</title>
        <authorList>
            <person name="Pinheiro-Aguiar R."/>
            <person name="do Amaral V.S.G."/>
            <person name="Pereira I.B."/>
            <person name="Kurtenbach E."/>
            <person name="Almeida F.C.L."/>
        </authorList>
    </citation>
    <scope>STRUCTURE BY NMR</scope>
    <scope>DISULFIDE BONDS</scope>
</reference>
<proteinExistence type="evidence at protein level"/>
<keyword id="KW-0002">3D-structure</keyword>
<keyword id="KW-0929">Antimicrobial</keyword>
<keyword id="KW-0903">Direct protein sequencing</keyword>
<keyword id="KW-1015">Disulfide bond</keyword>
<keyword id="KW-0295">Fungicide</keyword>
<keyword id="KW-0611">Plant defense</keyword>